<reference key="1">
    <citation type="journal article" date="1981" name="Cell">
        <title>Structure and evolution of goat gamma-, beta C- and beta A-globin genes: three developmentally regulated genes contain inserted elements.</title>
        <authorList>
            <person name="Schon E.A."/>
            <person name="Cleary M.L."/>
            <person name="Haynes J.R."/>
            <person name="Lingrel J.B."/>
        </authorList>
    </citation>
    <scope>NUCLEOTIDE SEQUENCE [GENOMIC DNA]</scope>
</reference>
<reference key="2">
    <citation type="journal article" date="1980" name="J. Biol. Chem.">
        <title>The isolation of the beta A-, beta C-, and gamma-globin genes and a presumptive embryonic globin gene from a goat DNA recombinant library.</title>
        <authorList>
            <person name="Haynes J.R."/>
            <person name="Rosteck P.R. Jr."/>
            <person name="Schon E.A."/>
            <person name="Gallagher P.M."/>
            <person name="Burks D.J."/>
            <person name="Smith K."/>
            <person name="Lingrel J.B."/>
        </authorList>
    </citation>
    <scope>NUCLEOTIDE SEQUENCE [GENOMIC DNA] OF 67-135</scope>
</reference>
<protein>
    <recommendedName>
        <fullName>Hemoglobin subunit beta-C</fullName>
    </recommendedName>
    <alternativeName>
        <fullName>Beta-C-globin</fullName>
    </alternativeName>
    <alternativeName>
        <fullName>Cysteine beta-globin</fullName>
    </alternativeName>
    <alternativeName>
        <fullName>Hemoglobin beta-C chain</fullName>
    </alternativeName>
</protein>
<dbReference type="EMBL" id="M15389">
    <property type="protein sequence ID" value="AAA30914.1"/>
    <property type="status" value="ALT_SEQ"/>
    <property type="molecule type" value="Genomic_DNA"/>
</dbReference>
<dbReference type="EMBL" id="K00662">
    <property type="protein sequence ID" value="AAA30921.1"/>
    <property type="molecule type" value="Genomic_DNA"/>
</dbReference>
<dbReference type="EMBL" id="K00661">
    <property type="protein sequence ID" value="AAA30921.1"/>
    <property type="status" value="JOINED"/>
    <property type="molecule type" value="Genomic_DNA"/>
</dbReference>
<dbReference type="PIR" id="B02396">
    <property type="entry name" value="HBGTC"/>
</dbReference>
<dbReference type="RefSeq" id="XP_005689870.1">
    <property type="nucleotide sequence ID" value="XM_005689813.2"/>
</dbReference>
<dbReference type="SMR" id="P02078"/>
<dbReference type="Ensembl" id="ENSCHIT00000036686.1">
    <property type="protein sequence ID" value="ENSCHIP00000028816.1"/>
    <property type="gene ID" value="ENSCHIG00000024184.1"/>
</dbReference>
<dbReference type="GeneID" id="102175045"/>
<dbReference type="KEGG" id="chx:102175045"/>
<dbReference type="CTD" id="102175045"/>
<dbReference type="GeneTree" id="ENSGT00940000156216"/>
<dbReference type="OMA" id="MVEWSEN"/>
<dbReference type="OrthoDB" id="9886081at2759"/>
<dbReference type="Proteomes" id="UP000291000">
    <property type="component" value="Chromosome 15"/>
</dbReference>
<dbReference type="Proteomes" id="UP000694566">
    <property type="component" value="Unplaced"/>
</dbReference>
<dbReference type="Bgee" id="ENSCHIG00000024184">
    <property type="expression patterns" value="Expressed in metanephros cortex and 16 other cell types or tissues"/>
</dbReference>
<dbReference type="GO" id="GO:0072562">
    <property type="term" value="C:blood microparticle"/>
    <property type="evidence" value="ECO:0007669"/>
    <property type="project" value="TreeGrafter"/>
</dbReference>
<dbReference type="GO" id="GO:0031838">
    <property type="term" value="C:haptoglobin-hemoglobin complex"/>
    <property type="evidence" value="ECO:0007669"/>
    <property type="project" value="TreeGrafter"/>
</dbReference>
<dbReference type="GO" id="GO:0005833">
    <property type="term" value="C:hemoglobin complex"/>
    <property type="evidence" value="ECO:0007669"/>
    <property type="project" value="InterPro"/>
</dbReference>
<dbReference type="GO" id="GO:0031720">
    <property type="term" value="F:haptoglobin binding"/>
    <property type="evidence" value="ECO:0007669"/>
    <property type="project" value="TreeGrafter"/>
</dbReference>
<dbReference type="GO" id="GO:0020037">
    <property type="term" value="F:heme binding"/>
    <property type="evidence" value="ECO:0007669"/>
    <property type="project" value="InterPro"/>
</dbReference>
<dbReference type="GO" id="GO:0031721">
    <property type="term" value="F:hemoglobin alpha binding"/>
    <property type="evidence" value="ECO:0007669"/>
    <property type="project" value="TreeGrafter"/>
</dbReference>
<dbReference type="GO" id="GO:0046872">
    <property type="term" value="F:metal ion binding"/>
    <property type="evidence" value="ECO:0007669"/>
    <property type="project" value="UniProtKB-KW"/>
</dbReference>
<dbReference type="GO" id="GO:0043177">
    <property type="term" value="F:organic acid binding"/>
    <property type="evidence" value="ECO:0007669"/>
    <property type="project" value="TreeGrafter"/>
</dbReference>
<dbReference type="GO" id="GO:0019825">
    <property type="term" value="F:oxygen binding"/>
    <property type="evidence" value="ECO:0007669"/>
    <property type="project" value="InterPro"/>
</dbReference>
<dbReference type="GO" id="GO:0005344">
    <property type="term" value="F:oxygen carrier activity"/>
    <property type="evidence" value="ECO:0007669"/>
    <property type="project" value="UniProtKB-KW"/>
</dbReference>
<dbReference type="GO" id="GO:0004601">
    <property type="term" value="F:peroxidase activity"/>
    <property type="evidence" value="ECO:0007669"/>
    <property type="project" value="TreeGrafter"/>
</dbReference>
<dbReference type="GO" id="GO:0042744">
    <property type="term" value="P:hydrogen peroxide catabolic process"/>
    <property type="evidence" value="ECO:0007669"/>
    <property type="project" value="TreeGrafter"/>
</dbReference>
<dbReference type="CDD" id="cd08925">
    <property type="entry name" value="Hb-beta-like"/>
    <property type="match status" value="1"/>
</dbReference>
<dbReference type="FunFam" id="1.10.490.10:FF:000001">
    <property type="entry name" value="Hemoglobin subunit beta"/>
    <property type="match status" value="1"/>
</dbReference>
<dbReference type="Gene3D" id="1.10.490.10">
    <property type="entry name" value="Globins"/>
    <property type="match status" value="1"/>
</dbReference>
<dbReference type="InterPro" id="IPR000971">
    <property type="entry name" value="Globin"/>
</dbReference>
<dbReference type="InterPro" id="IPR009050">
    <property type="entry name" value="Globin-like_sf"/>
</dbReference>
<dbReference type="InterPro" id="IPR012292">
    <property type="entry name" value="Globin/Proto"/>
</dbReference>
<dbReference type="InterPro" id="IPR002337">
    <property type="entry name" value="Hemoglobin_b"/>
</dbReference>
<dbReference type="InterPro" id="IPR050056">
    <property type="entry name" value="Hemoglobin_oxygen_transport"/>
</dbReference>
<dbReference type="PANTHER" id="PTHR11442">
    <property type="entry name" value="HEMOGLOBIN FAMILY MEMBER"/>
    <property type="match status" value="1"/>
</dbReference>
<dbReference type="PANTHER" id="PTHR11442:SF42">
    <property type="entry name" value="HEMOGLOBIN SUBUNIT BETA"/>
    <property type="match status" value="1"/>
</dbReference>
<dbReference type="Pfam" id="PF00042">
    <property type="entry name" value="Globin"/>
    <property type="match status" value="1"/>
</dbReference>
<dbReference type="PRINTS" id="PR00814">
    <property type="entry name" value="BETAHAEM"/>
</dbReference>
<dbReference type="SUPFAM" id="SSF46458">
    <property type="entry name" value="Globin-like"/>
    <property type="match status" value="1"/>
</dbReference>
<dbReference type="PROSITE" id="PS01033">
    <property type="entry name" value="GLOBIN"/>
    <property type="match status" value="1"/>
</dbReference>
<gene>
    <name type="primary">HBBC</name>
</gene>
<organism>
    <name type="scientific">Capra hircus</name>
    <name type="common">Goat</name>
    <dbReference type="NCBI Taxonomy" id="9925"/>
    <lineage>
        <taxon>Eukaryota</taxon>
        <taxon>Metazoa</taxon>
        <taxon>Chordata</taxon>
        <taxon>Craniata</taxon>
        <taxon>Vertebrata</taxon>
        <taxon>Euteleostomi</taxon>
        <taxon>Mammalia</taxon>
        <taxon>Eutheria</taxon>
        <taxon>Laurasiatheria</taxon>
        <taxon>Artiodactyla</taxon>
        <taxon>Ruminantia</taxon>
        <taxon>Pecora</taxon>
        <taxon>Bovidae</taxon>
        <taxon>Caprinae</taxon>
        <taxon>Capra</taxon>
    </lineage>
</organism>
<name>HBBC_CAPHI</name>
<comment type="function">
    <text>Involved in oxygen transport from the lung to the various peripheral tissues.</text>
</comment>
<comment type="subunit">
    <text>Heterotetramer of two alpha chains and two beta chains.</text>
</comment>
<comment type="tissue specificity">
    <text>Red blood cells.</text>
</comment>
<comment type="miscellaneous">
    <text>This type of beta-C chain is found when anemia has been experimentally produced.</text>
</comment>
<comment type="similarity">
    <text evidence="1">Belongs to the globin family.</text>
</comment>
<evidence type="ECO:0000255" key="1">
    <source>
        <dbReference type="PROSITE-ProRule" id="PRU00238"/>
    </source>
</evidence>
<feature type="chain" id="PRO_0000052910" description="Hemoglobin subunit beta-C">
    <location>
        <begin position="1"/>
        <end position="142"/>
    </location>
</feature>
<feature type="domain" description="Globin" evidence="1">
    <location>
        <begin position="1"/>
        <end position="142"/>
    </location>
</feature>
<feature type="binding site" description="distal binding residue">
    <location>
        <position position="59"/>
    </location>
    <ligand>
        <name>heme b</name>
        <dbReference type="ChEBI" id="CHEBI:60344"/>
    </ligand>
    <ligandPart>
        <name>Fe</name>
        <dbReference type="ChEBI" id="CHEBI:18248"/>
    </ligandPart>
</feature>
<feature type="binding site" description="proximal binding residue">
    <location>
        <position position="88"/>
    </location>
    <ligand>
        <name>heme b</name>
        <dbReference type="ChEBI" id="CHEBI:60344"/>
    </ligand>
    <ligandPart>
        <name>Fe</name>
        <dbReference type="ChEBI" id="CHEBI:18248"/>
    </ligandPart>
</feature>
<sequence>MPNKALITGFWSKVKVDEVGAEALGRLLVVYPWTQRFFEHFGDLSSADAVLGNAKVKAHGKKVLDSFSNGVQHLDDLKGTFAELSELHCDKLHVDPENFRLLGNVLVIVLARHFGKEFTPELQAEFQKVVAGVASALAHRYH</sequence>
<proteinExistence type="evidence at transcript level"/>
<accession>P02078</accession>
<accession>Q28326</accession>
<keyword id="KW-0349">Heme</keyword>
<keyword id="KW-0408">Iron</keyword>
<keyword id="KW-0479">Metal-binding</keyword>
<keyword id="KW-0561">Oxygen transport</keyword>
<keyword id="KW-1185">Reference proteome</keyword>
<keyword id="KW-0813">Transport</keyword>